<proteinExistence type="inferred from homology"/>
<protein>
    <recommendedName>
        <fullName>Protein MucB</fullName>
    </recommendedName>
</protein>
<dbReference type="EMBL" id="D90147">
    <property type="protein sequence ID" value="BAA14176.1"/>
    <property type="molecule type" value="Genomic_DNA"/>
</dbReference>
<dbReference type="EMBL" id="M13388">
    <property type="protein sequence ID" value="AAA98278.1"/>
    <property type="molecule type" value="Genomic_DNA"/>
</dbReference>
<dbReference type="PIR" id="C23157">
    <property type="entry name" value="ZWECBP"/>
</dbReference>
<dbReference type="SMR" id="P07375"/>
<dbReference type="DIP" id="DIP-16999N"/>
<dbReference type="GO" id="GO:0005829">
    <property type="term" value="C:cytosol"/>
    <property type="evidence" value="ECO:0007669"/>
    <property type="project" value="TreeGrafter"/>
</dbReference>
<dbReference type="GO" id="GO:0003684">
    <property type="term" value="F:damaged DNA binding"/>
    <property type="evidence" value="ECO:0007669"/>
    <property type="project" value="InterPro"/>
</dbReference>
<dbReference type="GO" id="GO:0003887">
    <property type="term" value="F:DNA-directed DNA polymerase activity"/>
    <property type="evidence" value="ECO:0007669"/>
    <property type="project" value="TreeGrafter"/>
</dbReference>
<dbReference type="GO" id="GO:0042276">
    <property type="term" value="P:error-prone translesion synthesis"/>
    <property type="evidence" value="ECO:0007669"/>
    <property type="project" value="TreeGrafter"/>
</dbReference>
<dbReference type="GO" id="GO:0009432">
    <property type="term" value="P:SOS response"/>
    <property type="evidence" value="ECO:0007669"/>
    <property type="project" value="UniProtKB-KW"/>
</dbReference>
<dbReference type="CDD" id="cd01700">
    <property type="entry name" value="PolY_Pol_V_umuC"/>
    <property type="match status" value="1"/>
</dbReference>
<dbReference type="Gene3D" id="3.30.70.270">
    <property type="match status" value="1"/>
</dbReference>
<dbReference type="Gene3D" id="3.40.1170.60">
    <property type="match status" value="1"/>
</dbReference>
<dbReference type="Gene3D" id="1.10.150.20">
    <property type="entry name" value="5' to 3' exonuclease, C-terminal subdomain"/>
    <property type="match status" value="1"/>
</dbReference>
<dbReference type="Gene3D" id="3.30.1490.100">
    <property type="entry name" value="DNA polymerase, Y-family, little finger domain"/>
    <property type="match status" value="1"/>
</dbReference>
<dbReference type="InterPro" id="IPR043502">
    <property type="entry name" value="DNA/RNA_pol_sf"/>
</dbReference>
<dbReference type="InterPro" id="IPR036775">
    <property type="entry name" value="DNA_pol_Y-fam_lit_finger_sf"/>
</dbReference>
<dbReference type="InterPro" id="IPR017961">
    <property type="entry name" value="DNA_pol_Y-fam_little_finger"/>
</dbReference>
<dbReference type="InterPro" id="IPR050116">
    <property type="entry name" value="DNA_polymerase-Y"/>
</dbReference>
<dbReference type="InterPro" id="IPR025188">
    <property type="entry name" value="DUF4113"/>
</dbReference>
<dbReference type="InterPro" id="IPR043128">
    <property type="entry name" value="Rev_trsase/Diguanyl_cyclase"/>
</dbReference>
<dbReference type="InterPro" id="IPR001126">
    <property type="entry name" value="UmuC"/>
</dbReference>
<dbReference type="NCBIfam" id="NF002955">
    <property type="entry name" value="PRK03609.1"/>
    <property type="match status" value="1"/>
</dbReference>
<dbReference type="PANTHER" id="PTHR11076">
    <property type="entry name" value="DNA REPAIR POLYMERASE UMUC / TRANSFERASE FAMILY MEMBER"/>
    <property type="match status" value="1"/>
</dbReference>
<dbReference type="PANTHER" id="PTHR11076:SF34">
    <property type="entry name" value="PROTEIN UMUC"/>
    <property type="match status" value="1"/>
</dbReference>
<dbReference type="Pfam" id="PF13438">
    <property type="entry name" value="DUF4113"/>
    <property type="match status" value="1"/>
</dbReference>
<dbReference type="Pfam" id="PF00817">
    <property type="entry name" value="IMS"/>
    <property type="match status" value="1"/>
</dbReference>
<dbReference type="Pfam" id="PF11799">
    <property type="entry name" value="IMS_C"/>
    <property type="match status" value="1"/>
</dbReference>
<dbReference type="SUPFAM" id="SSF56672">
    <property type="entry name" value="DNA/RNA polymerases"/>
    <property type="match status" value="1"/>
</dbReference>
<dbReference type="PROSITE" id="PS50173">
    <property type="entry name" value="UMUC"/>
    <property type="match status" value="1"/>
</dbReference>
<evidence type="ECO:0000255" key="1">
    <source>
        <dbReference type="PROSITE-ProRule" id="PRU00216"/>
    </source>
</evidence>
<evidence type="ECO:0000305" key="2"/>
<organism>
    <name type="scientific">Escherichia coli</name>
    <dbReference type="NCBI Taxonomy" id="562"/>
    <lineage>
        <taxon>Bacteria</taxon>
        <taxon>Pseudomonadati</taxon>
        <taxon>Pseudomonadota</taxon>
        <taxon>Gammaproteobacteria</taxon>
        <taxon>Enterobacterales</taxon>
        <taxon>Enterobacteriaceae</taxon>
        <taxon>Escherichia</taxon>
    </lineage>
</organism>
<keyword id="KW-0227">DNA damage</keyword>
<keyword id="KW-0234">DNA repair</keyword>
<keyword id="KW-0614">Plasmid</keyword>
<keyword id="KW-0741">SOS mutagenesis</keyword>
<keyword id="KW-0742">SOS response</keyword>
<feature type="chain" id="PRO_0000173979" description="Protein MucB">
    <location>
        <begin position="1"/>
        <end position="420"/>
    </location>
</feature>
<feature type="domain" description="UmuC" evidence="1">
    <location>
        <begin position="2"/>
        <end position="187"/>
    </location>
</feature>
<name>MUCB_ECOLX</name>
<comment type="function">
    <text>Involved in UV protection and mutation.</text>
</comment>
<comment type="miscellaneous">
    <text>The mucAB operon is the plasmid-borne analog of the E.coli umuDC operon.</text>
</comment>
<comment type="similarity">
    <text evidence="2">Belongs to the DNA polymerase type-Y family.</text>
</comment>
<sequence length="420" mass="46361">MFALIDVNGMYASCEQAFRPDLANRAVAVLSNNDGNIVARNYLAKKAGLKMGDPYFKVRPIIERHNIAIFSSNYTLYASMSARFAAVVESLASHVEQYSIDELFVDCKGITAAMSLDAFGRQLREEVRRHTTLVCGVGIARTKTLAKLCNHAAKTWPATGGVVALDDGARLKKLMSILPVAEVWGVGHRTEKALATMGIKTVLDLARADTRLIRKTFGVVLERTVRELRGEACFSLEENPPAKQQIVVSRSFGQRVETLTDMQQAVTGFAARAAEKLRNERQYCRVISVFIRTSPYSVRDTQYANQATEKLTVATQDSRTIIQAAQALARIWREDIAYAKAGVMLADFSGKEAQLDLFDSATPSAGSEALMAVLDGINRRGKNQLFFAGQGIDNSFAMRRQMLSPDYTTDWRSIPIATIK</sequence>
<reference key="1">
    <citation type="journal article" date="1985" name="Proc. Natl. Acad. Sci. U.S.A.">
        <title>umuDC and mucAB operons whose products are required for UV light- and chemical-induced mutagenesis: UmuD, MucA, and LexA proteins share homology.</title>
        <authorList>
            <person name="Perry K.L."/>
            <person name="Elledge S.J."/>
            <person name="Mitchell B.B."/>
            <person name="Marsh L."/>
            <person name="Walker G.C."/>
        </authorList>
    </citation>
    <scope>NUCLEOTIDE SEQUENCE [GENOMIC DNA]</scope>
</reference>
<geneLocation type="plasmid">
    <name>IncN pKM101</name>
</geneLocation>
<gene>
    <name type="primary">mucB</name>
</gene>
<accession>P07375</accession>